<reference key="1">
    <citation type="journal article" date="2005" name="Nature">
        <title>Sequencing of Aspergillus nidulans and comparative analysis with A. fumigatus and A. oryzae.</title>
        <authorList>
            <person name="Galagan J.E."/>
            <person name="Calvo S.E."/>
            <person name="Cuomo C."/>
            <person name="Ma L.-J."/>
            <person name="Wortman J.R."/>
            <person name="Batzoglou S."/>
            <person name="Lee S.-I."/>
            <person name="Bastuerkmen M."/>
            <person name="Spevak C.C."/>
            <person name="Clutterbuck J."/>
            <person name="Kapitonov V."/>
            <person name="Jurka J."/>
            <person name="Scazzocchio C."/>
            <person name="Farman M.L."/>
            <person name="Butler J."/>
            <person name="Purcell S."/>
            <person name="Harris S."/>
            <person name="Braus G.H."/>
            <person name="Draht O."/>
            <person name="Busch S."/>
            <person name="D'Enfert C."/>
            <person name="Bouchier C."/>
            <person name="Goldman G.H."/>
            <person name="Bell-Pedersen D."/>
            <person name="Griffiths-Jones S."/>
            <person name="Doonan J.H."/>
            <person name="Yu J."/>
            <person name="Vienken K."/>
            <person name="Pain A."/>
            <person name="Freitag M."/>
            <person name="Selker E.U."/>
            <person name="Archer D.B."/>
            <person name="Penalva M.A."/>
            <person name="Oakley B.R."/>
            <person name="Momany M."/>
            <person name="Tanaka T."/>
            <person name="Kumagai T."/>
            <person name="Asai K."/>
            <person name="Machida M."/>
            <person name="Nierman W.C."/>
            <person name="Denning D.W."/>
            <person name="Caddick M.X."/>
            <person name="Hynes M."/>
            <person name="Paoletti M."/>
            <person name="Fischer R."/>
            <person name="Miller B.L."/>
            <person name="Dyer P.S."/>
            <person name="Sachs M.S."/>
            <person name="Osmani S.A."/>
            <person name="Birren B.W."/>
        </authorList>
    </citation>
    <scope>NUCLEOTIDE SEQUENCE [LARGE SCALE GENOMIC DNA]</scope>
    <source>
        <strain>FGSC A4 / ATCC 38163 / CBS 112.46 / NRRL 194 / M139</strain>
    </source>
</reference>
<reference key="2">
    <citation type="journal article" date="2009" name="Fungal Genet. Biol.">
        <title>The 2008 update of the Aspergillus nidulans genome annotation: a community effort.</title>
        <authorList>
            <person name="Wortman J.R."/>
            <person name="Gilsenan J.M."/>
            <person name="Joardar V."/>
            <person name="Deegan J."/>
            <person name="Clutterbuck J."/>
            <person name="Andersen M.R."/>
            <person name="Archer D."/>
            <person name="Bencina M."/>
            <person name="Braus G."/>
            <person name="Coutinho P."/>
            <person name="von Dohren H."/>
            <person name="Doonan J."/>
            <person name="Driessen A.J."/>
            <person name="Durek P."/>
            <person name="Espeso E."/>
            <person name="Fekete E."/>
            <person name="Flipphi M."/>
            <person name="Estrada C.G."/>
            <person name="Geysens S."/>
            <person name="Goldman G."/>
            <person name="de Groot P.W."/>
            <person name="Hansen K."/>
            <person name="Harris S.D."/>
            <person name="Heinekamp T."/>
            <person name="Helmstaedt K."/>
            <person name="Henrissat B."/>
            <person name="Hofmann G."/>
            <person name="Homan T."/>
            <person name="Horio T."/>
            <person name="Horiuchi H."/>
            <person name="James S."/>
            <person name="Jones M."/>
            <person name="Karaffa L."/>
            <person name="Karanyi Z."/>
            <person name="Kato M."/>
            <person name="Keller N."/>
            <person name="Kelly D.E."/>
            <person name="Kiel J.A."/>
            <person name="Kim J.M."/>
            <person name="van der Klei I.J."/>
            <person name="Klis F.M."/>
            <person name="Kovalchuk A."/>
            <person name="Krasevec N."/>
            <person name="Kubicek C.P."/>
            <person name="Liu B."/>
            <person name="Maccabe A."/>
            <person name="Meyer V."/>
            <person name="Mirabito P."/>
            <person name="Miskei M."/>
            <person name="Mos M."/>
            <person name="Mullins J."/>
            <person name="Nelson D.R."/>
            <person name="Nielsen J."/>
            <person name="Oakley B.R."/>
            <person name="Osmani S.A."/>
            <person name="Pakula T."/>
            <person name="Paszewski A."/>
            <person name="Paulsen I."/>
            <person name="Pilsyk S."/>
            <person name="Pocsi I."/>
            <person name="Punt P.J."/>
            <person name="Ram A.F."/>
            <person name="Ren Q."/>
            <person name="Robellet X."/>
            <person name="Robson G."/>
            <person name="Seiboth B."/>
            <person name="van Solingen P."/>
            <person name="Specht T."/>
            <person name="Sun J."/>
            <person name="Taheri-Talesh N."/>
            <person name="Takeshita N."/>
            <person name="Ussery D."/>
            <person name="vanKuyk P.A."/>
            <person name="Visser H."/>
            <person name="van de Vondervoort P.J."/>
            <person name="de Vries R.P."/>
            <person name="Walton J."/>
            <person name="Xiang X."/>
            <person name="Xiong Y."/>
            <person name="Zeng A.P."/>
            <person name="Brandt B.W."/>
            <person name="Cornell M.J."/>
            <person name="van den Hondel C.A."/>
            <person name="Visser J."/>
            <person name="Oliver S.G."/>
            <person name="Turner G."/>
        </authorList>
    </citation>
    <scope>GENOME REANNOTATION</scope>
    <source>
        <strain>FGSC A4 / ATCC 38163 / CBS 112.46 / NRRL 194 / M139</strain>
    </source>
</reference>
<evidence type="ECO:0000250" key="1"/>
<evidence type="ECO:0000250" key="2">
    <source>
        <dbReference type="UniProtKB" id="Q9UST6"/>
    </source>
</evidence>
<evidence type="ECO:0000255" key="3"/>
<evidence type="ECO:0000305" key="4"/>
<accession>Q5AZQ6</accession>
<accession>C8V1S1</accession>
<gene>
    <name type="primary">spc24</name>
    <name type="ORF">AN6224</name>
</gene>
<organism>
    <name type="scientific">Emericella nidulans (strain FGSC A4 / ATCC 38163 / CBS 112.46 / NRRL 194 / M139)</name>
    <name type="common">Aspergillus nidulans</name>
    <dbReference type="NCBI Taxonomy" id="227321"/>
    <lineage>
        <taxon>Eukaryota</taxon>
        <taxon>Fungi</taxon>
        <taxon>Dikarya</taxon>
        <taxon>Ascomycota</taxon>
        <taxon>Pezizomycotina</taxon>
        <taxon>Eurotiomycetes</taxon>
        <taxon>Eurotiomycetidae</taxon>
        <taxon>Eurotiales</taxon>
        <taxon>Aspergillaceae</taxon>
        <taxon>Aspergillus</taxon>
        <taxon>Aspergillus subgen. Nidulantes</taxon>
    </lineage>
</organism>
<feature type="chain" id="PRO_0000246663" description="Probable kinetochore protein spc24">
    <location>
        <begin position="1"/>
        <end position="200"/>
    </location>
</feature>
<feature type="coiled-coil region" evidence="3">
    <location>
        <begin position="42"/>
        <end position="129"/>
    </location>
</feature>
<name>SPC24_EMENI</name>
<comment type="function">
    <text evidence="1">Acts as a component of the essential kinetochore-associated NDC80 complex, which is required for chromosome segregation and spindle checkpoint activity.</text>
</comment>
<comment type="subunit">
    <text evidence="1">Component of the NDC80 complex, which consists of ndc80, nuf2, spc24 and spc25.</text>
</comment>
<comment type="subcellular location">
    <subcellularLocation>
        <location evidence="2">Nucleus</location>
    </subcellularLocation>
    <subcellularLocation>
        <location evidence="2">Chromosome</location>
        <location evidence="2">Centromere</location>
        <location evidence="2">Kinetochore</location>
    </subcellularLocation>
    <subcellularLocation>
        <location evidence="2">Cytoplasm</location>
        <location evidence="2">Cytoskeleton</location>
        <location evidence="2">Microtubule organizing center</location>
        <location evidence="2">Spindle pole body</location>
    </subcellularLocation>
    <text evidence="2">Associated with kinetochores.</text>
</comment>
<comment type="similarity">
    <text evidence="4">Belongs to the SPC24 family.</text>
</comment>
<sequence length="200" mass="22688">MLLDENPSTLIHHTIGNFNIAPDKQAVSRINDSLATLQQSRELRMREAESSLRKLSRHLQSLSTQHEEAVAAHDASKHAAAMVELDTKKFRIAKAASELEIESERLEGELEMLKERLADLEAQGLEGDEATRREREADDAILLRLKIYRALGIDIEPDEAGNFTKAVIRNSRKGDVHVVNLDPKFSRFFYANYFWSTMQG</sequence>
<dbReference type="EMBL" id="AACD01000106">
    <property type="protein sequence ID" value="EAA57638.1"/>
    <property type="molecule type" value="Genomic_DNA"/>
</dbReference>
<dbReference type="EMBL" id="BN001301">
    <property type="protein sequence ID" value="CBF69913.1"/>
    <property type="molecule type" value="Genomic_DNA"/>
</dbReference>
<dbReference type="RefSeq" id="XP_663828.1">
    <property type="nucleotide sequence ID" value="XM_658736.1"/>
</dbReference>
<dbReference type="SMR" id="Q5AZQ6"/>
<dbReference type="FunCoup" id="Q5AZQ6">
    <property type="interactions" value="93"/>
</dbReference>
<dbReference type="STRING" id="227321.Q5AZQ6"/>
<dbReference type="EnsemblFungi" id="CBF69913">
    <property type="protein sequence ID" value="CBF69913"/>
    <property type="gene ID" value="ANIA_06224"/>
</dbReference>
<dbReference type="KEGG" id="ani:ANIA_06224"/>
<dbReference type="VEuPathDB" id="FungiDB:AN6224"/>
<dbReference type="eggNOG" id="ENOG502S52R">
    <property type="taxonomic scope" value="Eukaryota"/>
</dbReference>
<dbReference type="HOGENOM" id="CLU_091441_1_0_1"/>
<dbReference type="InParanoid" id="Q5AZQ6"/>
<dbReference type="OMA" id="AQCTSHF"/>
<dbReference type="OrthoDB" id="3344830at2759"/>
<dbReference type="Proteomes" id="UP000000560">
    <property type="component" value="Chromosome I"/>
</dbReference>
<dbReference type="GO" id="GO:0005737">
    <property type="term" value="C:cytoplasm"/>
    <property type="evidence" value="ECO:0007669"/>
    <property type="project" value="UniProtKB-KW"/>
</dbReference>
<dbReference type="GO" id="GO:0031262">
    <property type="term" value="C:Ndc80 complex"/>
    <property type="evidence" value="ECO:0000250"/>
    <property type="project" value="UniProtKB"/>
</dbReference>
<dbReference type="GO" id="GO:0005634">
    <property type="term" value="C:nucleus"/>
    <property type="evidence" value="ECO:0007669"/>
    <property type="project" value="UniProtKB-SubCell"/>
</dbReference>
<dbReference type="GO" id="GO:0005816">
    <property type="term" value="C:spindle pole body"/>
    <property type="evidence" value="ECO:0007669"/>
    <property type="project" value="UniProtKB-SubCell"/>
</dbReference>
<dbReference type="GO" id="GO:0051301">
    <property type="term" value="P:cell division"/>
    <property type="evidence" value="ECO:0007669"/>
    <property type="project" value="UniProtKB-KW"/>
</dbReference>
<dbReference type="GO" id="GO:0007059">
    <property type="term" value="P:chromosome segregation"/>
    <property type="evidence" value="ECO:0000318"/>
    <property type="project" value="GO_Central"/>
</dbReference>
<dbReference type="GO" id="GO:0031134">
    <property type="term" value="P:sister chromatid biorientation"/>
    <property type="evidence" value="ECO:0000250"/>
    <property type="project" value="UniProtKB"/>
</dbReference>
<dbReference type="CDD" id="cd11565">
    <property type="entry name" value="RWD_Spc24"/>
    <property type="match status" value="1"/>
</dbReference>
<dbReference type="Gene3D" id="3.30.160.430">
    <property type="match status" value="1"/>
</dbReference>
<dbReference type="InterPro" id="IPR013252">
    <property type="entry name" value="Ndc80_Spc24"/>
</dbReference>
<dbReference type="InterPro" id="IPR038066">
    <property type="entry name" value="Spc24_Fungi_globular_sf"/>
</dbReference>
<dbReference type="PANTHER" id="PTHR22142">
    <property type="match status" value="1"/>
</dbReference>
<dbReference type="PANTHER" id="PTHR22142:SF2">
    <property type="entry name" value="KINETOCHORE PROTEIN SPC24"/>
    <property type="match status" value="1"/>
</dbReference>
<dbReference type="Pfam" id="PF08286">
    <property type="entry name" value="Spc24"/>
    <property type="match status" value="1"/>
</dbReference>
<dbReference type="SUPFAM" id="SSF143026">
    <property type="entry name" value="Kinetochore globular domain"/>
    <property type="match status" value="1"/>
</dbReference>
<protein>
    <recommendedName>
        <fullName>Probable kinetochore protein spc24</fullName>
    </recommendedName>
</protein>
<proteinExistence type="inferred from homology"/>
<keyword id="KW-0131">Cell cycle</keyword>
<keyword id="KW-0132">Cell division</keyword>
<keyword id="KW-0137">Centromere</keyword>
<keyword id="KW-0158">Chromosome</keyword>
<keyword id="KW-0175">Coiled coil</keyword>
<keyword id="KW-0963">Cytoplasm</keyword>
<keyword id="KW-0206">Cytoskeleton</keyword>
<keyword id="KW-0995">Kinetochore</keyword>
<keyword id="KW-0498">Mitosis</keyword>
<keyword id="KW-0539">Nucleus</keyword>
<keyword id="KW-1185">Reference proteome</keyword>